<accession>Q623S8</accession>
<accession>A8WQY7</accession>
<keyword id="KW-0106">Calcium</keyword>
<keyword id="KW-0342">GTP-binding</keyword>
<keyword id="KW-0378">Hydrolase</keyword>
<keyword id="KW-0472">Membrane</keyword>
<keyword id="KW-0479">Metal-binding</keyword>
<keyword id="KW-0496">Mitochondrion</keyword>
<keyword id="KW-1000">Mitochondrion outer membrane</keyword>
<keyword id="KW-0547">Nucleotide-binding</keyword>
<keyword id="KW-1185">Reference proteome</keyword>
<keyword id="KW-0677">Repeat</keyword>
<keyword id="KW-0812">Transmembrane</keyword>
<keyword id="KW-1133">Transmembrane helix</keyword>
<protein>
    <recommendedName>
        <fullName>Mitochondrial Rho GTPase 1</fullName>
        <shortName>Miro</shortName>
        <ecNumber>3.6.5.-</ecNumber>
    </recommendedName>
</protein>
<organism>
    <name type="scientific">Caenorhabditis briggsae</name>
    <dbReference type="NCBI Taxonomy" id="6238"/>
    <lineage>
        <taxon>Eukaryota</taxon>
        <taxon>Metazoa</taxon>
        <taxon>Ecdysozoa</taxon>
        <taxon>Nematoda</taxon>
        <taxon>Chromadorea</taxon>
        <taxon>Rhabditida</taxon>
        <taxon>Rhabditina</taxon>
        <taxon>Rhabditomorpha</taxon>
        <taxon>Rhabditoidea</taxon>
        <taxon>Rhabditidae</taxon>
        <taxon>Peloderinae</taxon>
        <taxon>Caenorhabditis</taxon>
    </lineage>
</organism>
<evidence type="ECO:0000250" key="1">
    <source>
        <dbReference type="UniProtKB" id="Q8IXI2"/>
    </source>
</evidence>
<evidence type="ECO:0000255" key="2"/>
<evidence type="ECO:0000255" key="3">
    <source>
        <dbReference type="PROSITE-ProRule" id="PRU00448"/>
    </source>
</evidence>
<evidence type="ECO:0000255" key="4">
    <source>
        <dbReference type="PROSITE-ProRule" id="PRU00757"/>
    </source>
</evidence>
<evidence type="ECO:0000305" key="5"/>
<evidence type="ECO:0000312" key="6">
    <source>
        <dbReference type="WormBase" id="CBG01740"/>
    </source>
</evidence>
<name>MIRO1_CAEBR</name>
<reference key="1">
    <citation type="journal article" date="2003" name="PLoS Biol.">
        <title>The genome sequence of Caenorhabditis briggsae: a platform for comparative genomics.</title>
        <authorList>
            <person name="Stein L.D."/>
            <person name="Bao Z."/>
            <person name="Blasiar D."/>
            <person name="Blumenthal T."/>
            <person name="Brent M.R."/>
            <person name="Chen N."/>
            <person name="Chinwalla A."/>
            <person name="Clarke L."/>
            <person name="Clee C."/>
            <person name="Coghlan A."/>
            <person name="Coulson A."/>
            <person name="D'Eustachio P."/>
            <person name="Fitch D.H.A."/>
            <person name="Fulton L.A."/>
            <person name="Fulton R.E."/>
            <person name="Griffiths-Jones S."/>
            <person name="Harris T.W."/>
            <person name="Hillier L.W."/>
            <person name="Kamath R."/>
            <person name="Kuwabara P.E."/>
            <person name="Mardis E.R."/>
            <person name="Marra M.A."/>
            <person name="Miner T.L."/>
            <person name="Minx P."/>
            <person name="Mullikin J.C."/>
            <person name="Plumb R.W."/>
            <person name="Rogers J."/>
            <person name="Schein J.E."/>
            <person name="Sohrmann M."/>
            <person name="Spieth J."/>
            <person name="Stajich J.E."/>
            <person name="Wei C."/>
            <person name="Willey D."/>
            <person name="Wilson R.K."/>
            <person name="Durbin R.M."/>
            <person name="Waterston R.H."/>
        </authorList>
    </citation>
    <scope>NUCLEOTIDE SEQUENCE [LARGE SCALE GENOMIC DNA]</scope>
    <source>
        <strain>AF16</strain>
    </source>
</reference>
<feature type="chain" id="PRO_0000239325" description="Mitochondrial Rho GTPase 1" evidence="5">
    <location>
        <begin position="1"/>
        <end position="637"/>
    </location>
</feature>
<feature type="topological domain" description="Cytoplasmic" evidence="2">
    <location>
        <begin position="1"/>
        <end position="613"/>
    </location>
</feature>
<feature type="transmembrane region" description="Helical; Anchor for type IV membrane protein" evidence="2">
    <location>
        <begin position="614"/>
        <end position="634"/>
    </location>
</feature>
<feature type="topological domain" description="Mitochondrial intermembrane" evidence="2">
    <location>
        <begin position="635"/>
        <end position="637"/>
    </location>
</feature>
<feature type="domain" description="Miro 1" evidence="4">
    <location>
        <begin position="7"/>
        <end position="184"/>
    </location>
</feature>
<feature type="domain" description="EF-hand 1" evidence="3">
    <location>
        <begin position="200"/>
        <end position="235"/>
    </location>
</feature>
<feature type="domain" description="EF-hand 2" evidence="3">
    <location>
        <begin position="320"/>
        <end position="355"/>
    </location>
</feature>
<feature type="domain" description="Miro 2" evidence="4">
    <location>
        <begin position="436"/>
        <end position="601"/>
    </location>
</feature>
<feature type="binding site" evidence="2">
    <location>
        <begin position="28"/>
        <end position="35"/>
    </location>
    <ligand>
        <name>GTP</name>
        <dbReference type="ChEBI" id="CHEBI:37565"/>
        <label>1</label>
    </ligand>
</feature>
<feature type="binding site" evidence="2">
    <location>
        <begin position="74"/>
        <end position="78"/>
    </location>
    <ligand>
        <name>GTP</name>
        <dbReference type="ChEBI" id="CHEBI:37565"/>
        <label>1</label>
    </ligand>
</feature>
<feature type="binding site" evidence="2">
    <location>
        <begin position="135"/>
        <end position="138"/>
    </location>
    <ligand>
        <name>GTP</name>
        <dbReference type="ChEBI" id="CHEBI:37565"/>
        <label>1</label>
    </ligand>
</feature>
<feature type="binding site" evidence="3">
    <location>
        <position position="213"/>
    </location>
    <ligand>
        <name>Ca(2+)</name>
        <dbReference type="ChEBI" id="CHEBI:29108"/>
        <label>1</label>
    </ligand>
</feature>
<feature type="binding site" evidence="3">
    <location>
        <position position="215"/>
    </location>
    <ligand>
        <name>Ca(2+)</name>
        <dbReference type="ChEBI" id="CHEBI:29108"/>
        <label>1</label>
    </ligand>
</feature>
<feature type="binding site" evidence="3">
    <location>
        <position position="217"/>
    </location>
    <ligand>
        <name>Ca(2+)</name>
        <dbReference type="ChEBI" id="CHEBI:29108"/>
        <label>1</label>
    </ligand>
</feature>
<feature type="binding site" evidence="3">
    <location>
        <position position="219"/>
    </location>
    <ligand>
        <name>Ca(2+)</name>
        <dbReference type="ChEBI" id="CHEBI:29108"/>
        <label>1</label>
    </ligand>
</feature>
<feature type="binding site" evidence="3">
    <location>
        <position position="224"/>
    </location>
    <ligand>
        <name>Ca(2+)</name>
        <dbReference type="ChEBI" id="CHEBI:29108"/>
        <label>1</label>
    </ligand>
</feature>
<feature type="binding site" evidence="3">
    <location>
        <position position="333"/>
    </location>
    <ligand>
        <name>Ca(2+)</name>
        <dbReference type="ChEBI" id="CHEBI:29108"/>
        <label>2</label>
    </ligand>
</feature>
<feature type="binding site" evidence="3">
    <location>
        <position position="335"/>
    </location>
    <ligand>
        <name>Ca(2+)</name>
        <dbReference type="ChEBI" id="CHEBI:29108"/>
        <label>2</label>
    </ligand>
</feature>
<feature type="binding site" evidence="3">
    <location>
        <position position="337"/>
    </location>
    <ligand>
        <name>Ca(2+)</name>
        <dbReference type="ChEBI" id="CHEBI:29108"/>
        <label>2</label>
    </ligand>
</feature>
<feature type="binding site" evidence="3">
    <location>
        <position position="339"/>
    </location>
    <ligand>
        <name>Ca(2+)</name>
        <dbReference type="ChEBI" id="CHEBI:29108"/>
        <label>2</label>
    </ligand>
</feature>
<feature type="binding site" evidence="3">
    <location>
        <position position="344"/>
    </location>
    <ligand>
        <name>Ca(2+)</name>
        <dbReference type="ChEBI" id="CHEBI:29108"/>
        <label>2</label>
    </ligand>
</feature>
<feature type="binding site" evidence="2">
    <location>
        <begin position="445"/>
        <end position="452"/>
    </location>
    <ligand>
        <name>GTP</name>
        <dbReference type="ChEBI" id="CHEBI:37565"/>
        <label>2</label>
    </ligand>
</feature>
<feature type="binding site" evidence="2">
    <location>
        <begin position="482"/>
        <end position="486"/>
    </location>
    <ligand>
        <name>GTP</name>
        <dbReference type="ChEBI" id="CHEBI:37565"/>
        <label>2</label>
    </ligand>
</feature>
<feature type="binding site" evidence="2">
    <location>
        <begin position="549"/>
        <end position="552"/>
    </location>
    <ligand>
        <name>GTP</name>
        <dbReference type="ChEBI" id="CHEBI:37565"/>
        <label>2</label>
    </ligand>
</feature>
<proteinExistence type="inferred from homology"/>
<gene>
    <name evidence="6" type="primary">miro-1</name>
    <name evidence="6" type="ORF">CBG01740</name>
</gene>
<sequence length="637" mass="71382">MSDGETLADVRIVLIGDEGCGKTSLVMSLLEDEWVDAVPRRLDRVLIPADVTPENVTTSIVDLSIKEEEDNWLISEMRQANVICVVYSVTDDTTVERIQEKWLPLIRQAFGEYHETPIILVGNKSDGTANNTDKLPSGQSLVSSLQILPIMEANTEVETCVECSARTMKNVSEIFYYAQKAVIYPTRPLYDADTKQLTDRAKKALIRVFKICDRDNDGYLSDTELNDFQKLCFGIPLTSTALEDVKRAVADGCPDGVASDALMLAGFLYLHLLFIERGRHETTWAVLRKFGYETSLKLAEEYLYPRITIPVGCSTELSPEGVQFVSALFEKYDEDKDGCLSPSELQNLFSVCSAPVITKDNILALETNQRGWLTYNGYMAYWNMTTLINLTQTFEQLAYLGFPVGRSGPGRAGNTLDSIRVTRERKKDLENHGTDRKVFQCLVVGAKDAGKTVFMQSLAGRGMSDVAQIGRRHSPFVINRVKVKEESKYLLLREVDVLSPQDALGSGETSADVVAFLYDVSNPDSFAFCATVYQKYFYRTKTPCVMIATKVEREEVDQRWEIPPEEFCKQFELPKPIKFSSSNIGQSNSPIFEQLAMMAVYPHLRRVFYLSDSNLLSKITFGAAIVALAGFLVLKNL</sequence>
<comment type="function">
    <text evidence="1">Mitochondrial GTPase involved in mitochondrial trafficking. Probably involved in control of anterograde transport of mitochondria and their subcellular distribution.</text>
</comment>
<comment type="subcellular location">
    <subcellularLocation>
        <location evidence="1">Mitochondrion outer membrane</location>
        <topology evidence="2">Single-pass type IV membrane protein</topology>
    </subcellularLocation>
</comment>
<comment type="similarity">
    <text evidence="4 5">Belongs to the mitochondrial Rho GTPase family.</text>
</comment>
<dbReference type="EC" id="3.6.5.-"/>
<dbReference type="EMBL" id="HE601298">
    <property type="protein sequence ID" value="CAP22895.3"/>
    <property type="molecule type" value="Genomic_DNA"/>
</dbReference>
<dbReference type="RefSeq" id="XP_002634172.1">
    <property type="nucleotide sequence ID" value="XM_002634126.1"/>
</dbReference>
<dbReference type="SMR" id="Q623S8"/>
<dbReference type="FunCoup" id="Q623S8">
    <property type="interactions" value="2940"/>
</dbReference>
<dbReference type="STRING" id="6238.Q623S8"/>
<dbReference type="GeneID" id="8576167"/>
<dbReference type="KEGG" id="cbr:CBG_01740"/>
<dbReference type="CTD" id="8576167"/>
<dbReference type="WormBase" id="CBG01740">
    <property type="protein sequence ID" value="CBP46343"/>
    <property type="gene ID" value="WBGene00024928"/>
    <property type="gene designation" value="Cbr-miro-1"/>
</dbReference>
<dbReference type="eggNOG" id="KOG1707">
    <property type="taxonomic scope" value="Eukaryota"/>
</dbReference>
<dbReference type="HOGENOM" id="CLU_014255_3_1_1"/>
<dbReference type="InParanoid" id="Q623S8"/>
<dbReference type="OMA" id="HETTWGI"/>
<dbReference type="Proteomes" id="UP000008549">
    <property type="component" value="Unassembled WGS sequence"/>
</dbReference>
<dbReference type="GO" id="GO:0005741">
    <property type="term" value="C:mitochondrial outer membrane"/>
    <property type="evidence" value="ECO:0000250"/>
    <property type="project" value="UniProtKB"/>
</dbReference>
<dbReference type="GO" id="GO:0005509">
    <property type="term" value="F:calcium ion binding"/>
    <property type="evidence" value="ECO:0007669"/>
    <property type="project" value="InterPro"/>
</dbReference>
<dbReference type="GO" id="GO:0005525">
    <property type="term" value="F:GTP binding"/>
    <property type="evidence" value="ECO:0000318"/>
    <property type="project" value="GO_Central"/>
</dbReference>
<dbReference type="GO" id="GO:0003924">
    <property type="term" value="F:GTPase activity"/>
    <property type="evidence" value="ECO:0000318"/>
    <property type="project" value="GO_Central"/>
</dbReference>
<dbReference type="GO" id="GO:0019725">
    <property type="term" value="P:cellular homeostasis"/>
    <property type="evidence" value="ECO:0000250"/>
    <property type="project" value="UniProtKB"/>
</dbReference>
<dbReference type="GO" id="GO:0097345">
    <property type="term" value="P:mitochondrial outer membrane permeabilization"/>
    <property type="evidence" value="ECO:0000250"/>
    <property type="project" value="UniProtKB"/>
</dbReference>
<dbReference type="GO" id="GO:0007005">
    <property type="term" value="P:mitochondrion organization"/>
    <property type="evidence" value="ECO:0000318"/>
    <property type="project" value="GO_Central"/>
</dbReference>
<dbReference type="GO" id="GO:0047497">
    <property type="term" value="P:mitochondrion transport along microtubule"/>
    <property type="evidence" value="ECO:0000250"/>
    <property type="project" value="UniProtKB"/>
</dbReference>
<dbReference type="CDD" id="cd01893">
    <property type="entry name" value="Miro1"/>
    <property type="match status" value="1"/>
</dbReference>
<dbReference type="CDD" id="cd01892">
    <property type="entry name" value="Miro2"/>
    <property type="match status" value="1"/>
</dbReference>
<dbReference type="FunFam" id="1.10.238.10:FF:000011">
    <property type="entry name" value="Mitochondrial Rho GTPase"/>
    <property type="match status" value="1"/>
</dbReference>
<dbReference type="FunFam" id="3.40.50.300:FF:000170">
    <property type="entry name" value="Mitochondrial Rho GTPase"/>
    <property type="match status" value="1"/>
</dbReference>
<dbReference type="FunFam" id="3.40.50.300:FF:000553">
    <property type="entry name" value="Mitochondrial Rho GTPase"/>
    <property type="match status" value="1"/>
</dbReference>
<dbReference type="Gene3D" id="1.10.238.10">
    <property type="entry name" value="EF-hand"/>
    <property type="match status" value="2"/>
</dbReference>
<dbReference type="Gene3D" id="3.40.50.300">
    <property type="entry name" value="P-loop containing nucleotide triphosphate hydrolases"/>
    <property type="match status" value="2"/>
</dbReference>
<dbReference type="InterPro" id="IPR011992">
    <property type="entry name" value="EF-hand-dom_pair"/>
</dbReference>
<dbReference type="InterPro" id="IPR018247">
    <property type="entry name" value="EF_Hand_1_Ca_BS"/>
</dbReference>
<dbReference type="InterPro" id="IPR013566">
    <property type="entry name" value="EF_hand_assoc_1"/>
</dbReference>
<dbReference type="InterPro" id="IPR013567">
    <property type="entry name" value="EF_hand_assoc_2"/>
</dbReference>
<dbReference type="InterPro" id="IPR002048">
    <property type="entry name" value="EF_hand_dom"/>
</dbReference>
<dbReference type="InterPro" id="IPR021181">
    <property type="entry name" value="Miro"/>
</dbReference>
<dbReference type="InterPro" id="IPR052266">
    <property type="entry name" value="Miro-EF-hand_domain"/>
</dbReference>
<dbReference type="InterPro" id="IPR020860">
    <property type="entry name" value="MIRO_dom"/>
</dbReference>
<dbReference type="InterPro" id="IPR027417">
    <property type="entry name" value="P-loop_NTPase"/>
</dbReference>
<dbReference type="InterPro" id="IPR001806">
    <property type="entry name" value="Small_GTPase"/>
</dbReference>
<dbReference type="PANTHER" id="PTHR46819">
    <property type="entry name" value="EF-HAND CALCIUM-BINDING DOMAIN-CONTAINING PROTEIN 7"/>
    <property type="match status" value="1"/>
</dbReference>
<dbReference type="PANTHER" id="PTHR46819:SF1">
    <property type="entry name" value="EF-HAND CALCIUM-BINDING DOMAIN-CONTAINING PROTEIN 7"/>
    <property type="match status" value="1"/>
</dbReference>
<dbReference type="Pfam" id="PF13202">
    <property type="entry name" value="EF-hand_5"/>
    <property type="match status" value="2"/>
</dbReference>
<dbReference type="Pfam" id="PF08355">
    <property type="entry name" value="EF_assoc_1"/>
    <property type="match status" value="1"/>
</dbReference>
<dbReference type="Pfam" id="PF08356">
    <property type="entry name" value="EF_assoc_2"/>
    <property type="match status" value="1"/>
</dbReference>
<dbReference type="Pfam" id="PF00071">
    <property type="entry name" value="Ras"/>
    <property type="match status" value="1"/>
</dbReference>
<dbReference type="PIRSF" id="PIRSF037488">
    <property type="entry name" value="Mt_Rho_GTPase"/>
    <property type="match status" value="1"/>
</dbReference>
<dbReference type="PRINTS" id="PR00449">
    <property type="entry name" value="RASTRNSFRMNG"/>
</dbReference>
<dbReference type="SMART" id="SM00054">
    <property type="entry name" value="EFh"/>
    <property type="match status" value="2"/>
</dbReference>
<dbReference type="SMART" id="SM00175">
    <property type="entry name" value="RAB"/>
    <property type="match status" value="1"/>
</dbReference>
<dbReference type="SMART" id="SM00173">
    <property type="entry name" value="RAS"/>
    <property type="match status" value="1"/>
</dbReference>
<dbReference type="SMART" id="SM00174">
    <property type="entry name" value="RHO"/>
    <property type="match status" value="1"/>
</dbReference>
<dbReference type="SUPFAM" id="SSF47473">
    <property type="entry name" value="EF-hand"/>
    <property type="match status" value="1"/>
</dbReference>
<dbReference type="SUPFAM" id="SSF52540">
    <property type="entry name" value="P-loop containing nucleoside triphosphate hydrolases"/>
    <property type="match status" value="2"/>
</dbReference>
<dbReference type="PROSITE" id="PS00018">
    <property type="entry name" value="EF_HAND_1"/>
    <property type="match status" value="2"/>
</dbReference>
<dbReference type="PROSITE" id="PS50222">
    <property type="entry name" value="EF_HAND_2"/>
    <property type="match status" value="2"/>
</dbReference>
<dbReference type="PROSITE" id="PS51423">
    <property type="entry name" value="MIRO"/>
    <property type="match status" value="2"/>
</dbReference>